<proteinExistence type="inferred from homology"/>
<reference key="1">
    <citation type="journal article" date="2007" name="J. Bacteriol.">
        <title>Genome sequence analysis of the emerging human pathogenic acetic acid bacterium Granulibacter bethesdensis.</title>
        <authorList>
            <person name="Greenberg D.E."/>
            <person name="Porcella S.F."/>
            <person name="Zelazny A.M."/>
            <person name="Virtaneva K."/>
            <person name="Sturdevant D.E."/>
            <person name="Kupko J.J. III"/>
            <person name="Barbian K.D."/>
            <person name="Babar A."/>
            <person name="Dorward D.W."/>
            <person name="Holland S.M."/>
        </authorList>
    </citation>
    <scope>NUCLEOTIDE SEQUENCE [LARGE SCALE GENOMIC DNA]</scope>
    <source>
        <strain>ATCC BAA-1260 / CGDNIH1</strain>
    </source>
</reference>
<organism>
    <name type="scientific">Granulibacter bethesdensis (strain ATCC BAA-1260 / CGDNIH1)</name>
    <dbReference type="NCBI Taxonomy" id="391165"/>
    <lineage>
        <taxon>Bacteria</taxon>
        <taxon>Pseudomonadati</taxon>
        <taxon>Pseudomonadota</taxon>
        <taxon>Alphaproteobacteria</taxon>
        <taxon>Acetobacterales</taxon>
        <taxon>Acetobacteraceae</taxon>
        <taxon>Granulibacter</taxon>
    </lineage>
</organism>
<name>RLMN_GRABC</name>
<protein>
    <recommendedName>
        <fullName evidence="1">Dual-specificity RNA methyltransferase RlmN</fullName>
        <ecNumber evidence="1">2.1.1.192</ecNumber>
    </recommendedName>
    <alternativeName>
        <fullName evidence="1">23S rRNA (adenine(2503)-C(2))-methyltransferase</fullName>
    </alternativeName>
    <alternativeName>
        <fullName evidence="1">23S rRNA m2A2503 methyltransferase</fullName>
    </alternativeName>
    <alternativeName>
        <fullName evidence="1">Ribosomal RNA large subunit methyltransferase N</fullName>
    </alternativeName>
    <alternativeName>
        <fullName evidence="1">tRNA (adenine(37)-C(2))-methyltransferase</fullName>
    </alternativeName>
    <alternativeName>
        <fullName evidence="1">tRNA m2A37 methyltransferase</fullName>
    </alternativeName>
</protein>
<keyword id="KW-0004">4Fe-4S</keyword>
<keyword id="KW-0963">Cytoplasm</keyword>
<keyword id="KW-1015">Disulfide bond</keyword>
<keyword id="KW-0408">Iron</keyword>
<keyword id="KW-0411">Iron-sulfur</keyword>
<keyword id="KW-0479">Metal-binding</keyword>
<keyword id="KW-0489">Methyltransferase</keyword>
<keyword id="KW-1185">Reference proteome</keyword>
<keyword id="KW-0698">rRNA processing</keyword>
<keyword id="KW-0949">S-adenosyl-L-methionine</keyword>
<keyword id="KW-0808">Transferase</keyword>
<keyword id="KW-0819">tRNA processing</keyword>
<feature type="chain" id="PRO_0000350200" description="Dual-specificity RNA methyltransferase RlmN">
    <location>
        <begin position="1"/>
        <end position="397"/>
    </location>
</feature>
<feature type="domain" description="Radical SAM core" evidence="2">
    <location>
        <begin position="138"/>
        <end position="377"/>
    </location>
</feature>
<feature type="active site" description="Proton acceptor" evidence="1">
    <location>
        <position position="130"/>
    </location>
</feature>
<feature type="active site" description="S-methylcysteine intermediate" evidence="1">
    <location>
        <position position="383"/>
    </location>
</feature>
<feature type="binding site" evidence="1">
    <location>
        <position position="152"/>
    </location>
    <ligand>
        <name>[4Fe-4S] cluster</name>
        <dbReference type="ChEBI" id="CHEBI:49883"/>
        <note>4Fe-4S-S-AdoMet</note>
    </ligand>
</feature>
<feature type="binding site" evidence="1">
    <location>
        <position position="156"/>
    </location>
    <ligand>
        <name>[4Fe-4S] cluster</name>
        <dbReference type="ChEBI" id="CHEBI:49883"/>
        <note>4Fe-4S-S-AdoMet</note>
    </ligand>
</feature>
<feature type="binding site" evidence="1">
    <location>
        <position position="159"/>
    </location>
    <ligand>
        <name>[4Fe-4S] cluster</name>
        <dbReference type="ChEBI" id="CHEBI:49883"/>
        <note>4Fe-4S-S-AdoMet</note>
    </ligand>
</feature>
<feature type="binding site" evidence="1">
    <location>
        <begin position="209"/>
        <end position="210"/>
    </location>
    <ligand>
        <name>S-adenosyl-L-methionine</name>
        <dbReference type="ChEBI" id="CHEBI:59789"/>
    </ligand>
</feature>
<feature type="binding site" evidence="1">
    <location>
        <position position="241"/>
    </location>
    <ligand>
        <name>S-adenosyl-L-methionine</name>
        <dbReference type="ChEBI" id="CHEBI:59789"/>
    </ligand>
</feature>
<feature type="binding site" evidence="1">
    <location>
        <begin position="263"/>
        <end position="265"/>
    </location>
    <ligand>
        <name>S-adenosyl-L-methionine</name>
        <dbReference type="ChEBI" id="CHEBI:59789"/>
    </ligand>
</feature>
<feature type="binding site" evidence="1">
    <location>
        <position position="340"/>
    </location>
    <ligand>
        <name>S-adenosyl-L-methionine</name>
        <dbReference type="ChEBI" id="CHEBI:59789"/>
    </ligand>
</feature>
<feature type="disulfide bond" description="(transient)" evidence="1">
    <location>
        <begin position="145"/>
        <end position="383"/>
    </location>
</feature>
<evidence type="ECO:0000255" key="1">
    <source>
        <dbReference type="HAMAP-Rule" id="MF_01849"/>
    </source>
</evidence>
<evidence type="ECO:0000255" key="2">
    <source>
        <dbReference type="PROSITE-ProRule" id="PRU01266"/>
    </source>
</evidence>
<gene>
    <name evidence="1" type="primary">rlmN</name>
    <name type="ordered locus">GbCGDNIH1_0446</name>
</gene>
<dbReference type="EC" id="2.1.1.192" evidence="1"/>
<dbReference type="EMBL" id="CP000394">
    <property type="protein sequence ID" value="ABI61344.1"/>
    <property type="molecule type" value="Genomic_DNA"/>
</dbReference>
<dbReference type="RefSeq" id="WP_011631154.1">
    <property type="nucleotide sequence ID" value="NC_008343.2"/>
</dbReference>
<dbReference type="SMR" id="Q0BV08"/>
<dbReference type="STRING" id="391165.GbCGDNIH1_0446"/>
<dbReference type="KEGG" id="gbe:GbCGDNIH1_0446"/>
<dbReference type="eggNOG" id="COG0820">
    <property type="taxonomic scope" value="Bacteria"/>
</dbReference>
<dbReference type="HOGENOM" id="CLU_029101_0_0_5"/>
<dbReference type="OrthoDB" id="9793973at2"/>
<dbReference type="Proteomes" id="UP000001963">
    <property type="component" value="Chromosome"/>
</dbReference>
<dbReference type="GO" id="GO:0005737">
    <property type="term" value="C:cytoplasm"/>
    <property type="evidence" value="ECO:0007669"/>
    <property type="project" value="UniProtKB-SubCell"/>
</dbReference>
<dbReference type="GO" id="GO:0051539">
    <property type="term" value="F:4 iron, 4 sulfur cluster binding"/>
    <property type="evidence" value="ECO:0007669"/>
    <property type="project" value="UniProtKB-UniRule"/>
</dbReference>
<dbReference type="GO" id="GO:0046872">
    <property type="term" value="F:metal ion binding"/>
    <property type="evidence" value="ECO:0007669"/>
    <property type="project" value="UniProtKB-KW"/>
</dbReference>
<dbReference type="GO" id="GO:0070040">
    <property type="term" value="F:rRNA (adenine(2503)-C2-)-methyltransferase activity"/>
    <property type="evidence" value="ECO:0007669"/>
    <property type="project" value="UniProtKB-UniRule"/>
</dbReference>
<dbReference type="GO" id="GO:0019843">
    <property type="term" value="F:rRNA binding"/>
    <property type="evidence" value="ECO:0007669"/>
    <property type="project" value="UniProtKB-UniRule"/>
</dbReference>
<dbReference type="GO" id="GO:0002935">
    <property type="term" value="F:tRNA (adenine(37)-C2)-methyltransferase activity"/>
    <property type="evidence" value="ECO:0007669"/>
    <property type="project" value="UniProtKB-UniRule"/>
</dbReference>
<dbReference type="GO" id="GO:0000049">
    <property type="term" value="F:tRNA binding"/>
    <property type="evidence" value="ECO:0007669"/>
    <property type="project" value="UniProtKB-UniRule"/>
</dbReference>
<dbReference type="GO" id="GO:0070475">
    <property type="term" value="P:rRNA base methylation"/>
    <property type="evidence" value="ECO:0007669"/>
    <property type="project" value="UniProtKB-UniRule"/>
</dbReference>
<dbReference type="GO" id="GO:0030488">
    <property type="term" value="P:tRNA methylation"/>
    <property type="evidence" value="ECO:0007669"/>
    <property type="project" value="UniProtKB-UniRule"/>
</dbReference>
<dbReference type="CDD" id="cd01335">
    <property type="entry name" value="Radical_SAM"/>
    <property type="match status" value="1"/>
</dbReference>
<dbReference type="Gene3D" id="1.10.150.530">
    <property type="match status" value="1"/>
</dbReference>
<dbReference type="Gene3D" id="3.20.20.70">
    <property type="entry name" value="Aldolase class I"/>
    <property type="match status" value="1"/>
</dbReference>
<dbReference type="HAMAP" id="MF_01849">
    <property type="entry name" value="RNA_methyltr_RlmN"/>
    <property type="match status" value="1"/>
</dbReference>
<dbReference type="InterPro" id="IPR013785">
    <property type="entry name" value="Aldolase_TIM"/>
</dbReference>
<dbReference type="InterPro" id="IPR040072">
    <property type="entry name" value="Methyltransferase_A"/>
</dbReference>
<dbReference type="InterPro" id="IPR048641">
    <property type="entry name" value="RlmN_N"/>
</dbReference>
<dbReference type="InterPro" id="IPR027492">
    <property type="entry name" value="RNA_MTrfase_RlmN"/>
</dbReference>
<dbReference type="InterPro" id="IPR004383">
    <property type="entry name" value="rRNA_lsu_MTrfase_RlmN/Cfr"/>
</dbReference>
<dbReference type="InterPro" id="IPR007197">
    <property type="entry name" value="rSAM"/>
</dbReference>
<dbReference type="NCBIfam" id="TIGR00048">
    <property type="entry name" value="rRNA_mod_RlmN"/>
    <property type="match status" value="1"/>
</dbReference>
<dbReference type="PANTHER" id="PTHR30544">
    <property type="entry name" value="23S RRNA METHYLTRANSFERASE"/>
    <property type="match status" value="1"/>
</dbReference>
<dbReference type="PANTHER" id="PTHR30544:SF5">
    <property type="entry name" value="RADICAL SAM CORE DOMAIN-CONTAINING PROTEIN"/>
    <property type="match status" value="1"/>
</dbReference>
<dbReference type="Pfam" id="PF04055">
    <property type="entry name" value="Radical_SAM"/>
    <property type="match status" value="1"/>
</dbReference>
<dbReference type="Pfam" id="PF21016">
    <property type="entry name" value="RlmN_N"/>
    <property type="match status" value="1"/>
</dbReference>
<dbReference type="PIRSF" id="PIRSF006004">
    <property type="entry name" value="CHP00048"/>
    <property type="match status" value="1"/>
</dbReference>
<dbReference type="SFLD" id="SFLDF00275">
    <property type="entry name" value="adenosine_C2_methyltransferase"/>
    <property type="match status" value="1"/>
</dbReference>
<dbReference type="SFLD" id="SFLDG01062">
    <property type="entry name" value="methyltransferase_(Class_A)"/>
    <property type="match status" value="1"/>
</dbReference>
<dbReference type="SUPFAM" id="SSF102114">
    <property type="entry name" value="Radical SAM enzymes"/>
    <property type="match status" value="1"/>
</dbReference>
<dbReference type="PROSITE" id="PS51918">
    <property type="entry name" value="RADICAL_SAM"/>
    <property type="match status" value="1"/>
</dbReference>
<comment type="function">
    <text evidence="1">Specifically methylates position 2 of adenine 2503 in 23S rRNA and position 2 of adenine 37 in tRNAs. m2A2503 modification seems to play a crucial role in the proofreading step occurring at the peptidyl transferase center and thus would serve to optimize ribosomal fidelity.</text>
</comment>
<comment type="catalytic activity">
    <reaction evidence="1">
        <text>adenosine(2503) in 23S rRNA + 2 reduced [2Fe-2S]-[ferredoxin] + 2 S-adenosyl-L-methionine = 2-methyladenosine(2503) in 23S rRNA + 5'-deoxyadenosine + L-methionine + 2 oxidized [2Fe-2S]-[ferredoxin] + S-adenosyl-L-homocysteine</text>
        <dbReference type="Rhea" id="RHEA:42916"/>
        <dbReference type="Rhea" id="RHEA-COMP:10000"/>
        <dbReference type="Rhea" id="RHEA-COMP:10001"/>
        <dbReference type="Rhea" id="RHEA-COMP:10152"/>
        <dbReference type="Rhea" id="RHEA-COMP:10282"/>
        <dbReference type="ChEBI" id="CHEBI:17319"/>
        <dbReference type="ChEBI" id="CHEBI:33737"/>
        <dbReference type="ChEBI" id="CHEBI:33738"/>
        <dbReference type="ChEBI" id="CHEBI:57844"/>
        <dbReference type="ChEBI" id="CHEBI:57856"/>
        <dbReference type="ChEBI" id="CHEBI:59789"/>
        <dbReference type="ChEBI" id="CHEBI:74411"/>
        <dbReference type="ChEBI" id="CHEBI:74497"/>
        <dbReference type="EC" id="2.1.1.192"/>
    </reaction>
</comment>
<comment type="catalytic activity">
    <reaction evidence="1">
        <text>adenosine(37) in tRNA + 2 reduced [2Fe-2S]-[ferredoxin] + 2 S-adenosyl-L-methionine = 2-methyladenosine(37) in tRNA + 5'-deoxyadenosine + L-methionine + 2 oxidized [2Fe-2S]-[ferredoxin] + S-adenosyl-L-homocysteine</text>
        <dbReference type="Rhea" id="RHEA:43332"/>
        <dbReference type="Rhea" id="RHEA-COMP:10000"/>
        <dbReference type="Rhea" id="RHEA-COMP:10001"/>
        <dbReference type="Rhea" id="RHEA-COMP:10162"/>
        <dbReference type="Rhea" id="RHEA-COMP:10485"/>
        <dbReference type="ChEBI" id="CHEBI:17319"/>
        <dbReference type="ChEBI" id="CHEBI:33737"/>
        <dbReference type="ChEBI" id="CHEBI:33738"/>
        <dbReference type="ChEBI" id="CHEBI:57844"/>
        <dbReference type="ChEBI" id="CHEBI:57856"/>
        <dbReference type="ChEBI" id="CHEBI:59789"/>
        <dbReference type="ChEBI" id="CHEBI:74411"/>
        <dbReference type="ChEBI" id="CHEBI:74497"/>
        <dbReference type="EC" id="2.1.1.192"/>
    </reaction>
</comment>
<comment type="cofactor">
    <cofactor evidence="1">
        <name>[4Fe-4S] cluster</name>
        <dbReference type="ChEBI" id="CHEBI:49883"/>
    </cofactor>
    <text evidence="1">Binds 1 [4Fe-4S] cluster. The cluster is coordinated with 3 cysteines and an exchangeable S-adenosyl-L-methionine.</text>
</comment>
<comment type="subcellular location">
    <subcellularLocation>
        <location evidence="1">Cytoplasm</location>
    </subcellularLocation>
</comment>
<comment type="miscellaneous">
    <text evidence="1">Reaction proceeds by a ping-pong mechanism involving intermediate methylation of a conserved cysteine residue.</text>
</comment>
<comment type="similarity">
    <text evidence="1">Belongs to the radical SAM superfamily. RlmN family.</text>
</comment>
<sequence length="397" mass="44249">MTSASQAAPVALPVMPDAEDARIMAKAALFAPPPSVMEDGRKDLVGLSREQLTEALAEIGFPAFRAKQLWHWIYHRGETDFRVMSSIAKPQQETLAERFVISRPAVTECLTSVDETRKWLFRFRDGQEAETVYIPDPVEDRGAVCISSQVGCTLSCRFCHTGTQPLVRNLGPAEIVGQFMAARDAYGEWPSPKGETPRLLSTIVLMGMGEPLYNYENVKQAMRIVMDGDGIALSRRRITLSTSGVVPMMDRCGTELAVNLAISLHAVTDELRDELVPLNRKYPIRELIAACRRYPAASNARRITFEYIMLDGINDSEAEARELVRLIAGIPAKVNLIPFNPWPGSQYTPSRPKALERFSRIVMEAGFASPIRTPRGRDILAACGQLRTESRKERRID</sequence>
<accession>Q0BV08</accession>